<evidence type="ECO:0000255" key="1">
    <source>
        <dbReference type="HAMAP-Rule" id="MF_00480"/>
    </source>
</evidence>
<evidence type="ECO:0000305" key="2"/>
<sequence>MSRRHSAEKREVLPDPKFKDIIVTKFMNQIMRDGKKSVAERIVYGAFDLVETRAKKNPVEVFHNALEAVAPAVEVRSRRVGGATYQVPVEVRTERRQALAIRWLAAAAAGRNENTMRERLAGELMDASQGRGNAVKKREDTHRMADANKAFAHYRW</sequence>
<gene>
    <name evidence="1" type="primary">rpsG</name>
    <name type="ordered locus">HNE_2855</name>
</gene>
<proteinExistence type="inferred from homology"/>
<keyword id="KW-1185">Reference proteome</keyword>
<keyword id="KW-0687">Ribonucleoprotein</keyword>
<keyword id="KW-0689">Ribosomal protein</keyword>
<keyword id="KW-0694">RNA-binding</keyword>
<keyword id="KW-0699">rRNA-binding</keyword>
<keyword id="KW-0820">tRNA-binding</keyword>
<comment type="function">
    <text evidence="1">One of the primary rRNA binding proteins, it binds directly to 16S rRNA where it nucleates assembly of the head domain of the 30S subunit. Is located at the subunit interface close to the decoding center, probably blocks exit of the E-site tRNA.</text>
</comment>
<comment type="subunit">
    <text evidence="1">Part of the 30S ribosomal subunit. Contacts proteins S9 and S11.</text>
</comment>
<comment type="similarity">
    <text evidence="1">Belongs to the universal ribosomal protein uS7 family.</text>
</comment>
<dbReference type="EMBL" id="CP000158">
    <property type="protein sequence ID" value="ABI77662.1"/>
    <property type="molecule type" value="Genomic_DNA"/>
</dbReference>
<dbReference type="RefSeq" id="WP_011647830.1">
    <property type="nucleotide sequence ID" value="NC_008358.1"/>
</dbReference>
<dbReference type="SMR" id="Q0BYB0"/>
<dbReference type="STRING" id="228405.HNE_2855"/>
<dbReference type="KEGG" id="hne:HNE_2855"/>
<dbReference type="eggNOG" id="COG0049">
    <property type="taxonomic scope" value="Bacteria"/>
</dbReference>
<dbReference type="HOGENOM" id="CLU_072226_1_1_5"/>
<dbReference type="Proteomes" id="UP000001959">
    <property type="component" value="Chromosome"/>
</dbReference>
<dbReference type="GO" id="GO:0015935">
    <property type="term" value="C:small ribosomal subunit"/>
    <property type="evidence" value="ECO:0007669"/>
    <property type="project" value="InterPro"/>
</dbReference>
<dbReference type="GO" id="GO:0019843">
    <property type="term" value="F:rRNA binding"/>
    <property type="evidence" value="ECO:0007669"/>
    <property type="project" value="UniProtKB-UniRule"/>
</dbReference>
<dbReference type="GO" id="GO:0003735">
    <property type="term" value="F:structural constituent of ribosome"/>
    <property type="evidence" value="ECO:0007669"/>
    <property type="project" value="InterPro"/>
</dbReference>
<dbReference type="GO" id="GO:0000049">
    <property type="term" value="F:tRNA binding"/>
    <property type="evidence" value="ECO:0007669"/>
    <property type="project" value="UniProtKB-UniRule"/>
</dbReference>
<dbReference type="GO" id="GO:0006412">
    <property type="term" value="P:translation"/>
    <property type="evidence" value="ECO:0007669"/>
    <property type="project" value="UniProtKB-UniRule"/>
</dbReference>
<dbReference type="CDD" id="cd14869">
    <property type="entry name" value="uS7_Bacteria"/>
    <property type="match status" value="1"/>
</dbReference>
<dbReference type="FunFam" id="1.10.455.10:FF:000001">
    <property type="entry name" value="30S ribosomal protein S7"/>
    <property type="match status" value="1"/>
</dbReference>
<dbReference type="Gene3D" id="1.10.455.10">
    <property type="entry name" value="Ribosomal protein S7 domain"/>
    <property type="match status" value="1"/>
</dbReference>
<dbReference type="HAMAP" id="MF_00480_B">
    <property type="entry name" value="Ribosomal_uS7_B"/>
    <property type="match status" value="1"/>
</dbReference>
<dbReference type="InterPro" id="IPR000235">
    <property type="entry name" value="Ribosomal_uS7"/>
</dbReference>
<dbReference type="InterPro" id="IPR005717">
    <property type="entry name" value="Ribosomal_uS7_bac/org-type"/>
</dbReference>
<dbReference type="InterPro" id="IPR020606">
    <property type="entry name" value="Ribosomal_uS7_CS"/>
</dbReference>
<dbReference type="InterPro" id="IPR023798">
    <property type="entry name" value="Ribosomal_uS7_dom"/>
</dbReference>
<dbReference type="InterPro" id="IPR036823">
    <property type="entry name" value="Ribosomal_uS7_dom_sf"/>
</dbReference>
<dbReference type="NCBIfam" id="TIGR01029">
    <property type="entry name" value="rpsG_bact"/>
    <property type="match status" value="1"/>
</dbReference>
<dbReference type="PANTHER" id="PTHR11205">
    <property type="entry name" value="RIBOSOMAL PROTEIN S7"/>
    <property type="match status" value="1"/>
</dbReference>
<dbReference type="Pfam" id="PF00177">
    <property type="entry name" value="Ribosomal_S7"/>
    <property type="match status" value="1"/>
</dbReference>
<dbReference type="PIRSF" id="PIRSF002122">
    <property type="entry name" value="RPS7p_RPS7a_RPS5e_RPS7o"/>
    <property type="match status" value="1"/>
</dbReference>
<dbReference type="SUPFAM" id="SSF47973">
    <property type="entry name" value="Ribosomal protein S7"/>
    <property type="match status" value="1"/>
</dbReference>
<dbReference type="PROSITE" id="PS00052">
    <property type="entry name" value="RIBOSOMAL_S7"/>
    <property type="match status" value="1"/>
</dbReference>
<protein>
    <recommendedName>
        <fullName evidence="1">Small ribosomal subunit protein uS7</fullName>
    </recommendedName>
    <alternativeName>
        <fullName evidence="2">30S ribosomal protein S7</fullName>
    </alternativeName>
</protein>
<feature type="chain" id="PRO_1000014207" description="Small ribosomal subunit protein uS7">
    <location>
        <begin position="1"/>
        <end position="156"/>
    </location>
</feature>
<organism>
    <name type="scientific">Hyphomonas neptunium (strain ATCC 15444)</name>
    <dbReference type="NCBI Taxonomy" id="228405"/>
    <lineage>
        <taxon>Bacteria</taxon>
        <taxon>Pseudomonadati</taxon>
        <taxon>Pseudomonadota</taxon>
        <taxon>Alphaproteobacteria</taxon>
        <taxon>Hyphomonadales</taxon>
        <taxon>Hyphomonadaceae</taxon>
        <taxon>Hyphomonas</taxon>
    </lineage>
</organism>
<reference key="1">
    <citation type="journal article" date="2006" name="J. Bacteriol.">
        <title>Comparative genomic evidence for a close relationship between the dimorphic prosthecate bacteria Hyphomonas neptunium and Caulobacter crescentus.</title>
        <authorList>
            <person name="Badger J.H."/>
            <person name="Hoover T.R."/>
            <person name="Brun Y.V."/>
            <person name="Weiner R.M."/>
            <person name="Laub M.T."/>
            <person name="Alexandre G."/>
            <person name="Mrazek J."/>
            <person name="Ren Q."/>
            <person name="Paulsen I.T."/>
            <person name="Nelson K.E."/>
            <person name="Khouri H.M."/>
            <person name="Radune D."/>
            <person name="Sosa J."/>
            <person name="Dodson R.J."/>
            <person name="Sullivan S.A."/>
            <person name="Rosovitz M.J."/>
            <person name="Madupu R."/>
            <person name="Brinkac L.M."/>
            <person name="Durkin A.S."/>
            <person name="Daugherty S.C."/>
            <person name="Kothari S.P."/>
            <person name="Giglio M.G."/>
            <person name="Zhou L."/>
            <person name="Haft D.H."/>
            <person name="Selengut J.D."/>
            <person name="Davidsen T.M."/>
            <person name="Yang Q."/>
            <person name="Zafar N."/>
            <person name="Ward N.L."/>
        </authorList>
    </citation>
    <scope>NUCLEOTIDE SEQUENCE [LARGE SCALE GENOMIC DNA]</scope>
    <source>
        <strain>ATCC 15444</strain>
    </source>
</reference>
<name>RS7_HYPNA</name>
<accession>Q0BYB0</accession>